<name>KDSA_FUSNN</name>
<reference key="1">
    <citation type="journal article" date="2002" name="J. Bacteriol.">
        <title>Genome sequence and analysis of the oral bacterium Fusobacterium nucleatum strain ATCC 25586.</title>
        <authorList>
            <person name="Kapatral V."/>
            <person name="Anderson I."/>
            <person name="Ivanova N."/>
            <person name="Reznik G."/>
            <person name="Los T."/>
            <person name="Lykidis A."/>
            <person name="Bhattacharyya A."/>
            <person name="Bartman A."/>
            <person name="Gardner W."/>
            <person name="Grechkin G."/>
            <person name="Zhu L."/>
            <person name="Vasieva O."/>
            <person name="Chu L."/>
            <person name="Kogan Y."/>
            <person name="Chaga O."/>
            <person name="Goltsman E."/>
            <person name="Bernal A."/>
            <person name="Larsen N."/>
            <person name="D'Souza M."/>
            <person name="Walunas T."/>
            <person name="Pusch G."/>
            <person name="Haselkorn R."/>
            <person name="Fonstein M."/>
            <person name="Kyrpides N.C."/>
            <person name="Overbeek R."/>
        </authorList>
    </citation>
    <scope>NUCLEOTIDE SEQUENCE [LARGE SCALE GENOMIC DNA]</scope>
    <source>
        <strain>ATCC 25586 / DSM 15643 / BCRC 10681 / CIP 101130 / JCM 8532 / KCTC 2640 / LMG 13131 / VPI 4355</strain>
    </source>
</reference>
<gene>
    <name evidence="1" type="primary">kdsA</name>
    <name type="ordered locus">FN1224</name>
</gene>
<sequence>MLINDVNKVKVGNIVFGGKKRFVLIAGPCVMESQELMDEVAGGIKEICDRLGIEYIFKASFDKANRSSIYSYRGPGLEEGMKMLTKIKEKFNVPVITDVHEAWQCKEVAKVADILQIPAFLCRQTDLLIAAAETGKAVNIKKGQFLAPWDMKNIVVKMEESRNKNIMLCERGSTFGYNNMVVDMRSLLEMRKFNYPVIFDVTHSVQKPGGLGTATSGDREYVYPLLRAGLAIGVDAIFAEVHPNPAEAKSDGPNMLYLKDLEEILKIAIEIDKIVKGV</sequence>
<protein>
    <recommendedName>
        <fullName evidence="1">2-dehydro-3-deoxyphosphooctonate aldolase</fullName>
        <ecNumber evidence="1">2.5.1.55</ecNumber>
    </recommendedName>
    <alternativeName>
        <fullName evidence="1">3-deoxy-D-manno-octulosonic acid 8-phosphate synthase</fullName>
    </alternativeName>
    <alternativeName>
        <fullName evidence="1">KDO-8-phosphate synthase</fullName>
        <shortName evidence="1">KDO 8-P synthase</shortName>
        <shortName evidence="1">KDOPS</shortName>
    </alternativeName>
    <alternativeName>
        <fullName evidence="1">Phospho-2-dehydro-3-deoxyoctonate aldolase</fullName>
    </alternativeName>
</protein>
<feature type="chain" id="PRO_0000187128" description="2-dehydro-3-deoxyphosphooctonate aldolase">
    <location>
        <begin position="1"/>
        <end position="278"/>
    </location>
</feature>
<keyword id="KW-0963">Cytoplasm</keyword>
<keyword id="KW-0448">Lipopolysaccharide biosynthesis</keyword>
<keyword id="KW-1185">Reference proteome</keyword>
<keyword id="KW-0808">Transferase</keyword>
<comment type="catalytic activity">
    <reaction evidence="1">
        <text>D-arabinose 5-phosphate + phosphoenolpyruvate + H2O = 3-deoxy-alpha-D-manno-2-octulosonate-8-phosphate + phosphate</text>
        <dbReference type="Rhea" id="RHEA:14053"/>
        <dbReference type="ChEBI" id="CHEBI:15377"/>
        <dbReference type="ChEBI" id="CHEBI:43474"/>
        <dbReference type="ChEBI" id="CHEBI:57693"/>
        <dbReference type="ChEBI" id="CHEBI:58702"/>
        <dbReference type="ChEBI" id="CHEBI:85985"/>
        <dbReference type="EC" id="2.5.1.55"/>
    </reaction>
</comment>
<comment type="pathway">
    <text evidence="1">Carbohydrate biosynthesis; 3-deoxy-D-manno-octulosonate biosynthesis; 3-deoxy-D-manno-octulosonate from D-ribulose 5-phosphate: step 2/3.</text>
</comment>
<comment type="pathway">
    <text evidence="1">Bacterial outer membrane biogenesis; lipopolysaccharide biosynthesis.</text>
</comment>
<comment type="subcellular location">
    <subcellularLocation>
        <location evidence="1">Cytoplasm</location>
    </subcellularLocation>
</comment>
<comment type="similarity">
    <text evidence="1">Belongs to the KdsA family.</text>
</comment>
<comment type="sequence caution" evidence="2">
    <conflict type="erroneous initiation">
        <sequence resource="EMBL-CDS" id="AAL95420"/>
    </conflict>
</comment>
<proteinExistence type="inferred from homology"/>
<evidence type="ECO:0000255" key="1">
    <source>
        <dbReference type="HAMAP-Rule" id="MF_00056"/>
    </source>
</evidence>
<evidence type="ECO:0000305" key="2"/>
<dbReference type="EC" id="2.5.1.55" evidence="1"/>
<dbReference type="EMBL" id="AE009951">
    <property type="protein sequence ID" value="AAL95420.1"/>
    <property type="status" value="ALT_INIT"/>
    <property type="molecule type" value="Genomic_DNA"/>
</dbReference>
<dbReference type="RefSeq" id="NP_604121.1">
    <property type="nucleotide sequence ID" value="NC_003454.1"/>
</dbReference>
<dbReference type="RefSeq" id="WP_023041482.1">
    <property type="nucleotide sequence ID" value="NZ_OZ209243.1"/>
</dbReference>
<dbReference type="SMR" id="Q8RE91"/>
<dbReference type="STRING" id="190304.FN1224"/>
<dbReference type="PaxDb" id="190304-FN1224"/>
<dbReference type="EnsemblBacteria" id="AAL95420">
    <property type="protein sequence ID" value="AAL95420"/>
    <property type="gene ID" value="FN1224"/>
</dbReference>
<dbReference type="GeneID" id="79784201"/>
<dbReference type="KEGG" id="fnu:FN1224"/>
<dbReference type="PATRIC" id="fig|190304.8.peg.1787"/>
<dbReference type="eggNOG" id="COG2877">
    <property type="taxonomic scope" value="Bacteria"/>
</dbReference>
<dbReference type="HOGENOM" id="CLU_036666_0_0_0"/>
<dbReference type="InParanoid" id="Q8RE91"/>
<dbReference type="UniPathway" id="UPA00030"/>
<dbReference type="UniPathway" id="UPA00357">
    <property type="reaction ID" value="UER00474"/>
</dbReference>
<dbReference type="Proteomes" id="UP000002521">
    <property type="component" value="Chromosome"/>
</dbReference>
<dbReference type="GO" id="GO:0005829">
    <property type="term" value="C:cytosol"/>
    <property type="evidence" value="ECO:0000318"/>
    <property type="project" value="GO_Central"/>
</dbReference>
<dbReference type="GO" id="GO:0008676">
    <property type="term" value="F:3-deoxy-8-phosphooctulonate synthase activity"/>
    <property type="evidence" value="ECO:0000318"/>
    <property type="project" value="GO_Central"/>
</dbReference>
<dbReference type="GO" id="GO:0019294">
    <property type="term" value="P:keto-3-deoxy-D-manno-octulosonic acid biosynthetic process"/>
    <property type="evidence" value="ECO:0007669"/>
    <property type="project" value="UniProtKB-UniRule"/>
</dbReference>
<dbReference type="GO" id="GO:0046364">
    <property type="term" value="P:monosaccharide biosynthetic process"/>
    <property type="evidence" value="ECO:0000318"/>
    <property type="project" value="GO_Central"/>
</dbReference>
<dbReference type="Gene3D" id="3.20.20.70">
    <property type="entry name" value="Aldolase class I"/>
    <property type="match status" value="1"/>
</dbReference>
<dbReference type="HAMAP" id="MF_00056">
    <property type="entry name" value="KDO8P_synth"/>
    <property type="match status" value="1"/>
</dbReference>
<dbReference type="InterPro" id="IPR013785">
    <property type="entry name" value="Aldolase_TIM"/>
</dbReference>
<dbReference type="InterPro" id="IPR006218">
    <property type="entry name" value="DAHP1/KDSA"/>
</dbReference>
<dbReference type="InterPro" id="IPR006269">
    <property type="entry name" value="KDO8P_synthase"/>
</dbReference>
<dbReference type="NCBIfam" id="TIGR01362">
    <property type="entry name" value="KDO8P_synth"/>
    <property type="match status" value="1"/>
</dbReference>
<dbReference type="NCBIfam" id="NF003543">
    <property type="entry name" value="PRK05198.1"/>
    <property type="match status" value="1"/>
</dbReference>
<dbReference type="PANTHER" id="PTHR21057">
    <property type="entry name" value="PHOSPHO-2-DEHYDRO-3-DEOXYHEPTONATE ALDOLASE"/>
    <property type="match status" value="1"/>
</dbReference>
<dbReference type="Pfam" id="PF00793">
    <property type="entry name" value="DAHP_synth_1"/>
    <property type="match status" value="1"/>
</dbReference>
<dbReference type="SUPFAM" id="SSF51569">
    <property type="entry name" value="Aldolase"/>
    <property type="match status" value="1"/>
</dbReference>
<organism>
    <name type="scientific">Fusobacterium nucleatum subsp. nucleatum (strain ATCC 25586 / DSM 15643 / BCRC 10681 / CIP 101130 / JCM 8532 / KCTC 2640 / LMG 13131 / VPI 4355)</name>
    <dbReference type="NCBI Taxonomy" id="190304"/>
    <lineage>
        <taxon>Bacteria</taxon>
        <taxon>Fusobacteriati</taxon>
        <taxon>Fusobacteriota</taxon>
        <taxon>Fusobacteriia</taxon>
        <taxon>Fusobacteriales</taxon>
        <taxon>Fusobacteriaceae</taxon>
        <taxon>Fusobacterium</taxon>
    </lineage>
</organism>
<accession>Q8RE91</accession>